<keyword id="KW-0256">Endoplasmic reticulum</keyword>
<keyword id="KW-0326">Glycosidase</keyword>
<keyword id="KW-0378">Hydrolase</keyword>
<keyword id="KW-1185">Reference proteome</keyword>
<keyword id="KW-0732">Signal</keyword>
<gene>
    <name type="ORF">SPBC800.11</name>
</gene>
<proteinExistence type="inferred from homology"/>
<reference key="1">
    <citation type="journal article" date="2002" name="Nature">
        <title>The genome sequence of Schizosaccharomyces pombe.</title>
        <authorList>
            <person name="Wood V."/>
            <person name="Gwilliam R."/>
            <person name="Rajandream M.A."/>
            <person name="Lyne M.H."/>
            <person name="Lyne R."/>
            <person name="Stewart A."/>
            <person name="Sgouros J.G."/>
            <person name="Peat N."/>
            <person name="Hayles J."/>
            <person name="Baker S.G."/>
            <person name="Basham D."/>
            <person name="Bowman S."/>
            <person name="Brooks K."/>
            <person name="Brown D."/>
            <person name="Brown S."/>
            <person name="Chillingworth T."/>
            <person name="Churcher C.M."/>
            <person name="Collins M."/>
            <person name="Connor R."/>
            <person name="Cronin A."/>
            <person name="Davis P."/>
            <person name="Feltwell T."/>
            <person name="Fraser A."/>
            <person name="Gentles S."/>
            <person name="Goble A."/>
            <person name="Hamlin N."/>
            <person name="Harris D.E."/>
            <person name="Hidalgo J."/>
            <person name="Hodgson G."/>
            <person name="Holroyd S."/>
            <person name="Hornsby T."/>
            <person name="Howarth S."/>
            <person name="Huckle E.J."/>
            <person name="Hunt S."/>
            <person name="Jagels K."/>
            <person name="James K.D."/>
            <person name="Jones L."/>
            <person name="Jones M."/>
            <person name="Leather S."/>
            <person name="McDonald S."/>
            <person name="McLean J."/>
            <person name="Mooney P."/>
            <person name="Moule S."/>
            <person name="Mungall K.L."/>
            <person name="Murphy L.D."/>
            <person name="Niblett D."/>
            <person name="Odell C."/>
            <person name="Oliver K."/>
            <person name="O'Neil S."/>
            <person name="Pearson D."/>
            <person name="Quail M.A."/>
            <person name="Rabbinowitsch E."/>
            <person name="Rutherford K.M."/>
            <person name="Rutter S."/>
            <person name="Saunders D."/>
            <person name="Seeger K."/>
            <person name="Sharp S."/>
            <person name="Skelton J."/>
            <person name="Simmonds M.N."/>
            <person name="Squares R."/>
            <person name="Squares S."/>
            <person name="Stevens K."/>
            <person name="Taylor K."/>
            <person name="Taylor R.G."/>
            <person name="Tivey A."/>
            <person name="Walsh S.V."/>
            <person name="Warren T."/>
            <person name="Whitehead S."/>
            <person name="Woodward J.R."/>
            <person name="Volckaert G."/>
            <person name="Aert R."/>
            <person name="Robben J."/>
            <person name="Grymonprez B."/>
            <person name="Weltjens I."/>
            <person name="Vanstreels E."/>
            <person name="Rieger M."/>
            <person name="Schaefer M."/>
            <person name="Mueller-Auer S."/>
            <person name="Gabel C."/>
            <person name="Fuchs M."/>
            <person name="Duesterhoeft A."/>
            <person name="Fritzc C."/>
            <person name="Holzer E."/>
            <person name="Moestl D."/>
            <person name="Hilbert H."/>
            <person name="Borzym K."/>
            <person name="Langer I."/>
            <person name="Beck A."/>
            <person name="Lehrach H."/>
            <person name="Reinhardt R."/>
            <person name="Pohl T.M."/>
            <person name="Eger P."/>
            <person name="Zimmermann W."/>
            <person name="Wedler H."/>
            <person name="Wambutt R."/>
            <person name="Purnelle B."/>
            <person name="Goffeau A."/>
            <person name="Cadieu E."/>
            <person name="Dreano S."/>
            <person name="Gloux S."/>
            <person name="Lelaure V."/>
            <person name="Mottier S."/>
            <person name="Galibert F."/>
            <person name="Aves S.J."/>
            <person name="Xiang Z."/>
            <person name="Hunt C."/>
            <person name="Moore K."/>
            <person name="Hurst S.M."/>
            <person name="Lucas M."/>
            <person name="Rochet M."/>
            <person name="Gaillardin C."/>
            <person name="Tallada V.A."/>
            <person name="Garzon A."/>
            <person name="Thode G."/>
            <person name="Daga R.R."/>
            <person name="Cruzado L."/>
            <person name="Jimenez J."/>
            <person name="Sanchez M."/>
            <person name="del Rey F."/>
            <person name="Benito J."/>
            <person name="Dominguez A."/>
            <person name="Revuelta J.L."/>
            <person name="Moreno S."/>
            <person name="Armstrong J."/>
            <person name="Forsburg S.L."/>
            <person name="Cerutti L."/>
            <person name="Lowe T."/>
            <person name="McCombie W.R."/>
            <person name="Paulsen I."/>
            <person name="Potashkin J."/>
            <person name="Shpakovski G.V."/>
            <person name="Ussery D."/>
            <person name="Barrell B.G."/>
            <person name="Nurse P."/>
        </authorList>
    </citation>
    <scope>NUCLEOTIDE SEQUENCE [LARGE SCALE GENOMIC DNA]</scope>
    <source>
        <strain>972 / ATCC 24843</strain>
    </source>
</reference>
<reference key="2">
    <citation type="journal article" date="2006" name="Nat. Biotechnol.">
        <title>ORFeome cloning and global analysis of protein localization in the fission yeast Schizosaccharomyces pombe.</title>
        <authorList>
            <person name="Matsuyama A."/>
            <person name="Arai R."/>
            <person name="Yashiroda Y."/>
            <person name="Shirai A."/>
            <person name="Kamata A."/>
            <person name="Sekido S."/>
            <person name="Kobayashi Y."/>
            <person name="Hashimoto A."/>
            <person name="Hamamoto M."/>
            <person name="Hiraoka Y."/>
            <person name="Horinouchi S."/>
            <person name="Yoshida M."/>
        </authorList>
    </citation>
    <scope>SUBCELLULAR LOCATION [LARGE SCALE ANALYSIS]</scope>
</reference>
<organism>
    <name type="scientific">Schizosaccharomyces pombe (strain 972 / ATCC 24843)</name>
    <name type="common">Fission yeast</name>
    <dbReference type="NCBI Taxonomy" id="284812"/>
    <lineage>
        <taxon>Eukaryota</taxon>
        <taxon>Fungi</taxon>
        <taxon>Dikarya</taxon>
        <taxon>Ascomycota</taxon>
        <taxon>Taphrinomycotina</taxon>
        <taxon>Schizosaccharomycetes</taxon>
        <taxon>Schizosaccharomycetales</taxon>
        <taxon>Schizosaccharomycetaceae</taxon>
        <taxon>Schizosaccharomyces</taxon>
    </lineage>
</organism>
<dbReference type="EMBL" id="CU329671">
    <property type="protein sequence ID" value="CAC01526.1"/>
    <property type="molecule type" value="Genomic_DNA"/>
</dbReference>
<dbReference type="RefSeq" id="NP_595113.1">
    <property type="nucleotide sequence ID" value="NM_001021020.2"/>
</dbReference>
<dbReference type="SMR" id="Q9HGL1"/>
<dbReference type="BioGRID" id="277024">
    <property type="interactions" value="6"/>
</dbReference>
<dbReference type="FunCoup" id="Q9HGL1">
    <property type="interactions" value="414"/>
</dbReference>
<dbReference type="STRING" id="284812.Q9HGL1"/>
<dbReference type="PaxDb" id="4896-SPBC800.11.1"/>
<dbReference type="EnsemblFungi" id="SPBC800.11.1">
    <property type="protein sequence ID" value="SPBC800.11.1:pep"/>
    <property type="gene ID" value="SPBC800.11"/>
</dbReference>
<dbReference type="KEGG" id="spo:2540496"/>
<dbReference type="PomBase" id="SPBC800.11"/>
<dbReference type="VEuPathDB" id="FungiDB:SPBC800.11"/>
<dbReference type="eggNOG" id="KOG2938">
    <property type="taxonomic scope" value="Eukaryota"/>
</dbReference>
<dbReference type="HOGENOM" id="CLU_036838_7_0_1"/>
<dbReference type="InParanoid" id="Q9HGL1"/>
<dbReference type="OMA" id="FMVEMVH"/>
<dbReference type="PhylomeDB" id="Q9HGL1"/>
<dbReference type="PRO" id="PR:Q9HGL1"/>
<dbReference type="Proteomes" id="UP000002485">
    <property type="component" value="Chromosome II"/>
</dbReference>
<dbReference type="GO" id="GO:0005829">
    <property type="term" value="C:cytosol"/>
    <property type="evidence" value="ECO:0000318"/>
    <property type="project" value="GO_Central"/>
</dbReference>
<dbReference type="GO" id="GO:0005783">
    <property type="term" value="C:endoplasmic reticulum"/>
    <property type="evidence" value="ECO:0007005"/>
    <property type="project" value="PomBase"/>
</dbReference>
<dbReference type="GO" id="GO:0005788">
    <property type="term" value="C:endoplasmic reticulum lumen"/>
    <property type="evidence" value="ECO:0007669"/>
    <property type="project" value="UniProtKB-SubCell"/>
</dbReference>
<dbReference type="GO" id="GO:0008477">
    <property type="term" value="F:purine nucleosidase activity"/>
    <property type="evidence" value="ECO:0000318"/>
    <property type="project" value="GO_Central"/>
</dbReference>
<dbReference type="GO" id="GO:0006152">
    <property type="term" value="P:purine nucleoside catabolic process"/>
    <property type="evidence" value="ECO:0000318"/>
    <property type="project" value="GO_Central"/>
</dbReference>
<dbReference type="CDD" id="cd02654">
    <property type="entry name" value="nuc_hydro_CjNH"/>
    <property type="match status" value="1"/>
</dbReference>
<dbReference type="Gene3D" id="3.90.245.10">
    <property type="entry name" value="Ribonucleoside hydrolase-like"/>
    <property type="match status" value="1"/>
</dbReference>
<dbReference type="InterPro" id="IPR001910">
    <property type="entry name" value="Inosine/uridine_hydrolase_dom"/>
</dbReference>
<dbReference type="InterPro" id="IPR023186">
    <property type="entry name" value="IUNH"/>
</dbReference>
<dbReference type="InterPro" id="IPR036452">
    <property type="entry name" value="Ribo_hydro-like"/>
</dbReference>
<dbReference type="PANTHER" id="PTHR12304">
    <property type="entry name" value="INOSINE-URIDINE PREFERRING NUCLEOSIDE HYDROLASE"/>
    <property type="match status" value="1"/>
</dbReference>
<dbReference type="PANTHER" id="PTHR12304:SF25">
    <property type="entry name" value="INOSINE_URIDINE-PREFERRING NUCLEOSIDE HYDROLASE DOMAIN-CONTAINING PROTEIN"/>
    <property type="match status" value="1"/>
</dbReference>
<dbReference type="Pfam" id="PF01156">
    <property type="entry name" value="IU_nuc_hydro"/>
    <property type="match status" value="1"/>
</dbReference>
<dbReference type="SUPFAM" id="SSF53590">
    <property type="entry name" value="Nucleoside hydrolase"/>
    <property type="match status" value="1"/>
</dbReference>
<name>YHLB_SCHPO</name>
<sequence length="389" mass="42093">MHFAKLGAIGLLGSIICAYAASAASKVIIDNDGLTDLQVLFALQAKQQILGVTAIYGDYTLDDSLFLASDVLSTGNLTYCIPSFAGAAQPLLRTNNTFQIWQELYGSYVWQGYWQPEYETANTNNESYIYNTQISAAQFIIDMVKANPNEITIVAAGPMTNLAIALSIWPDLAKNTKSLVIMGGYVDSQIAQVTGGDFLNDMYSDFNLFMEPEAAQTAITADWPELIIAGNITSQVYPSQSLYNGIIARAGGMANIESDSGLSYAKQFVGNGTLPSGSFPFWDEVASAIAAWPEIVNSSYDAYVSVDTAYDSPFYGSLRMVPADLVPKKGVRTAKASMITGINVAMFYQKIYDSLTAEYSSYCMNGTIITPSNITISNTTNTTNTTGFY</sequence>
<comment type="subcellular location">
    <subcellularLocation>
        <location evidence="2">Endoplasmic reticulum lumen</location>
    </subcellularLocation>
</comment>
<comment type="similarity">
    <text evidence="3">Belongs to the IUNH family.</text>
</comment>
<feature type="signal peptide" evidence="1">
    <location>
        <begin position="1"/>
        <end position="23"/>
    </location>
</feature>
<feature type="chain" id="PRO_0000316596" description="Uncharacterized protein C800.11">
    <location>
        <begin position="24"/>
        <end position="389"/>
    </location>
</feature>
<protein>
    <recommendedName>
        <fullName>Uncharacterized protein C800.11</fullName>
    </recommendedName>
</protein>
<accession>Q9HGL1</accession>
<evidence type="ECO:0000255" key="1"/>
<evidence type="ECO:0000269" key="2">
    <source>
    </source>
</evidence>
<evidence type="ECO:0000305" key="3"/>